<feature type="signal peptide" evidence="2">
    <location>
        <begin position="1"/>
        <end position="21"/>
    </location>
</feature>
<feature type="chain" id="PRO_0000012556" description="Pheromone-binding protein 1">
    <location>
        <begin position="22"/>
        <end position="163"/>
    </location>
</feature>
<feature type="disulfide bond" evidence="1">
    <location>
        <begin position="40"/>
        <end position="75"/>
    </location>
</feature>
<feature type="disulfide bond" evidence="1">
    <location>
        <begin position="71"/>
        <end position="129"/>
    </location>
</feature>
<feature type="disulfide bond" evidence="1">
    <location>
        <begin position="118"/>
        <end position="138"/>
    </location>
</feature>
<sequence length="163" mass="18086">MLGKISLLLLPVFVAINLVHSSPEIIKNLSQNFCKAMDQCKQELNIPDSVIADLYNFWKDDYVMTDRLAGCAINCMATKLDVVDPDGNLHHGNAKEFAMKHGADASMAQQLVDIIHGCEKSAPPNDDKCMKTIDVAMCFKKEIHKLNWVPDMDVVLGEVLAEV</sequence>
<accession>Q17077</accession>
<reference key="1">
    <citation type="journal article" date="1990" name="J. Comp. Physiol. B">
        <title>Primary structure of a pheromone-binding protein from Antheraea pernyi: homologies with other ligand-carrying proteins.</title>
        <authorList>
            <person name="Raming K."/>
            <person name="Krieger J."/>
            <person name="Breer H."/>
        </authorList>
    </citation>
    <scope>NUCLEOTIDE SEQUENCE [MRNA]</scope>
    <source>
        <tissue>Antenna</tissue>
    </source>
</reference>
<protein>
    <recommendedName>
        <fullName>Pheromone-binding protein 1</fullName>
        <shortName>PBP 1</shortName>
    </recommendedName>
    <alternativeName>
        <fullName>APR-1</fullName>
    </alternativeName>
</protein>
<comment type="function">
    <text>This major soluble protein in olfactory sensilla of male moths might serve to solubilize the extremely hydrophobic pheromone molecules and to transport pheromone through the aqueous lymph to receptors located on olfactory cilia.</text>
</comment>
<comment type="tissue specificity">
    <text>Antenna.</text>
</comment>
<comment type="similarity">
    <text evidence="3">Belongs to the PBP/GOBP family.</text>
</comment>
<name>PBP1_ANTPE</name>
<dbReference type="EMBL" id="X96773">
    <property type="protein sequence ID" value="CAA65576.1"/>
    <property type="molecule type" value="mRNA"/>
</dbReference>
<dbReference type="PIR" id="S14269">
    <property type="entry name" value="S14269"/>
</dbReference>
<dbReference type="SMR" id="Q17077"/>
<dbReference type="GO" id="GO:0005550">
    <property type="term" value="F:pheromone binding"/>
    <property type="evidence" value="ECO:0007669"/>
    <property type="project" value="UniProtKB-KW"/>
</dbReference>
<dbReference type="GO" id="GO:0019236">
    <property type="term" value="P:response to pheromone"/>
    <property type="evidence" value="ECO:0007669"/>
    <property type="project" value="UniProtKB-KW"/>
</dbReference>
<dbReference type="CDD" id="cd23992">
    <property type="entry name" value="PBP_GOBP"/>
    <property type="match status" value="1"/>
</dbReference>
<dbReference type="Gene3D" id="1.10.238.20">
    <property type="entry name" value="Pheromone/general odorant binding protein domain"/>
    <property type="match status" value="1"/>
</dbReference>
<dbReference type="InterPro" id="IPR006072">
    <property type="entry name" value="Odorant/phero-bd_Lep"/>
</dbReference>
<dbReference type="InterPro" id="IPR006170">
    <property type="entry name" value="PBP/GOBP"/>
</dbReference>
<dbReference type="InterPro" id="IPR036728">
    <property type="entry name" value="PBP_GOBP_sf"/>
</dbReference>
<dbReference type="Pfam" id="PF01395">
    <property type="entry name" value="PBP_GOBP"/>
    <property type="match status" value="1"/>
</dbReference>
<dbReference type="PIRSF" id="PIRSF015604">
    <property type="entry name" value="Odorant/phero_bd"/>
    <property type="match status" value="1"/>
</dbReference>
<dbReference type="PRINTS" id="PR00484">
    <property type="entry name" value="PBPGOBP"/>
</dbReference>
<dbReference type="SMART" id="SM00708">
    <property type="entry name" value="PhBP"/>
    <property type="match status" value="1"/>
</dbReference>
<dbReference type="SUPFAM" id="SSF47565">
    <property type="entry name" value="Insect pheromone/odorant-binding proteins"/>
    <property type="match status" value="1"/>
</dbReference>
<keyword id="KW-1015">Disulfide bond</keyword>
<keyword id="KW-0589">Pheromone response</keyword>
<keyword id="KW-0590">Pheromone-binding</keyword>
<keyword id="KW-0732">Signal</keyword>
<keyword id="KW-0813">Transport</keyword>
<evidence type="ECO:0000250" key="1"/>
<evidence type="ECO:0000255" key="2"/>
<evidence type="ECO:0000305" key="3"/>
<proteinExistence type="evidence at transcript level"/>
<organism>
    <name type="scientific">Antheraea pernyi</name>
    <name type="common">Chinese oak silk moth</name>
    <name type="synonym">Bombyx pernyi</name>
    <dbReference type="NCBI Taxonomy" id="7119"/>
    <lineage>
        <taxon>Eukaryota</taxon>
        <taxon>Metazoa</taxon>
        <taxon>Ecdysozoa</taxon>
        <taxon>Arthropoda</taxon>
        <taxon>Hexapoda</taxon>
        <taxon>Insecta</taxon>
        <taxon>Pterygota</taxon>
        <taxon>Neoptera</taxon>
        <taxon>Endopterygota</taxon>
        <taxon>Lepidoptera</taxon>
        <taxon>Glossata</taxon>
        <taxon>Ditrysia</taxon>
        <taxon>Bombycoidea</taxon>
        <taxon>Saturniidae</taxon>
        <taxon>Saturniinae</taxon>
        <taxon>Saturniini</taxon>
        <taxon>Antheraea</taxon>
    </lineage>
</organism>